<proteinExistence type="evidence at protein level"/>
<dbReference type="EMBL" id="U00096">
    <property type="protein sequence ID" value="AAC75068.2"/>
    <property type="molecule type" value="Genomic_DNA"/>
</dbReference>
<dbReference type="EMBL" id="AP009048">
    <property type="protein sequence ID" value="BAA15828.1"/>
    <property type="status" value="ALT_INIT"/>
    <property type="molecule type" value="Genomic_DNA"/>
</dbReference>
<dbReference type="PIR" id="F64965">
    <property type="entry name" value="F64965"/>
</dbReference>
<dbReference type="RefSeq" id="NP_416511.4">
    <property type="nucleotide sequence ID" value="NC_000913.3"/>
</dbReference>
<dbReference type="RefSeq" id="WP_000450409.1">
    <property type="nucleotide sequence ID" value="NZ_STEB01000062.1"/>
</dbReference>
<dbReference type="SMR" id="P0A8M6"/>
<dbReference type="BioGRID" id="4261588">
    <property type="interactions" value="22"/>
</dbReference>
<dbReference type="BioGRID" id="850888">
    <property type="interactions" value="1"/>
</dbReference>
<dbReference type="DIP" id="DIP-47887N"/>
<dbReference type="FunCoup" id="P0A8M6">
    <property type="interactions" value="237"/>
</dbReference>
<dbReference type="IntAct" id="P0A8M6">
    <property type="interactions" value="5"/>
</dbReference>
<dbReference type="STRING" id="511145.b2007"/>
<dbReference type="jPOST" id="P0A8M6"/>
<dbReference type="PaxDb" id="511145-b2007"/>
<dbReference type="EnsemblBacteria" id="AAC75068">
    <property type="protein sequence ID" value="AAC75068"/>
    <property type="gene ID" value="b2007"/>
</dbReference>
<dbReference type="GeneID" id="946541"/>
<dbReference type="KEGG" id="ecj:JW1989"/>
<dbReference type="KEGG" id="eco:b2007"/>
<dbReference type="KEGG" id="ecoc:C3026_11325"/>
<dbReference type="PATRIC" id="fig|511145.12.peg.2083"/>
<dbReference type="EchoBASE" id="EB3172"/>
<dbReference type="eggNOG" id="COG2926">
    <property type="taxonomic scope" value="Bacteria"/>
</dbReference>
<dbReference type="HOGENOM" id="CLU_153146_0_0_6"/>
<dbReference type="InParanoid" id="P0A8M6"/>
<dbReference type="OMA" id="ENMRDDY"/>
<dbReference type="OrthoDB" id="90485at2"/>
<dbReference type="PhylomeDB" id="P0A8M6"/>
<dbReference type="BioCyc" id="EcoCyc:G7087-MONOMER"/>
<dbReference type="PRO" id="PR:P0A8M6"/>
<dbReference type="Proteomes" id="UP000000625">
    <property type="component" value="Chromosome"/>
</dbReference>
<dbReference type="GO" id="GO:0051286">
    <property type="term" value="C:cell tip"/>
    <property type="evidence" value="ECO:0000314"/>
    <property type="project" value="EcoCyc"/>
</dbReference>
<dbReference type="GO" id="GO:0005829">
    <property type="term" value="C:cytosol"/>
    <property type="evidence" value="ECO:0000314"/>
    <property type="project" value="EcoCyc"/>
</dbReference>
<dbReference type="GO" id="GO:1903066">
    <property type="term" value="P:regulation of protein localization to cell tip"/>
    <property type="evidence" value="ECO:0000315"/>
    <property type="project" value="EcoCyc"/>
</dbReference>
<dbReference type="HAMAP" id="MF_00683">
    <property type="entry name" value="Pole_loc_TmaR"/>
    <property type="match status" value="1"/>
</dbReference>
<dbReference type="InterPro" id="IPR007458">
    <property type="entry name" value="DUF496"/>
</dbReference>
<dbReference type="InterPro" id="IPR053375">
    <property type="entry name" value="UPF0265"/>
</dbReference>
<dbReference type="NCBIfam" id="NF003844">
    <property type="entry name" value="PRK05423.1"/>
    <property type="match status" value="1"/>
</dbReference>
<dbReference type="NCBIfam" id="NF040881">
    <property type="entry name" value="PTS_reg_TmaR"/>
    <property type="match status" value="1"/>
</dbReference>
<dbReference type="PANTHER" id="PTHR39591">
    <property type="entry name" value="UPF0265 PROTEIN YEEX"/>
    <property type="match status" value="1"/>
</dbReference>
<dbReference type="PANTHER" id="PTHR39591:SF1">
    <property type="entry name" value="UPF0265 PROTEIN YEEX"/>
    <property type="match status" value="1"/>
</dbReference>
<dbReference type="Pfam" id="PF04363">
    <property type="entry name" value="DUF496"/>
    <property type="match status" value="1"/>
</dbReference>
<dbReference type="PIRSF" id="PIRSF028773">
    <property type="entry name" value="UCP028773"/>
    <property type="match status" value="1"/>
</dbReference>
<keyword id="KW-0175">Coiled coil</keyword>
<keyword id="KW-0963">Cytoplasm</keyword>
<keyword id="KW-0903">Direct protein sequencing</keyword>
<keyword id="KW-0597">Phosphoprotein</keyword>
<keyword id="KW-1185">Reference proteome</keyword>
<keyword id="KW-0346">Stress response</keyword>
<accession>P0A8M6</accession>
<accession>O07992</accession>
<accession>O07995</accession>
<accession>P76367</accession>
<accession>Q8X8U3</accession>
<name>TMAR_ECOLI</name>
<feature type="chain" id="PRO_0000072758" description="Pole-localizer protein TmaR">
    <location>
        <begin position="1"/>
        <end position="109"/>
    </location>
</feature>
<feature type="coiled-coil region" evidence="1">
    <location>
        <begin position="14"/>
        <end position="41"/>
    </location>
</feature>
<feature type="modified residue" description="Phosphotyrosine" evidence="2">
    <location>
        <position position="72"/>
    </location>
</feature>
<feature type="modified residue" description="Phosphotyrosine" evidence="8">
    <location>
        <position position="79"/>
    </location>
</feature>
<feature type="mutagenesis site" description="Fails to form clusters and presents a diffused pattern throughout the cytoplasm." evidence="4">
    <original>V</original>
    <variation>L</variation>
    <location>
        <position position="15"/>
    </location>
</feature>
<feature type="mutagenesis site" description="Fails to form clusters and presents a diffused pattern throughout the cytoplasm. Shows a reduced swimming ability, is completely impaired in swarming on semi-solid agar and has a dramatically reduced ability to form biofilms." evidence="4">
    <original>R</original>
    <variation>P</variation>
    <location>
        <position position="20"/>
    </location>
</feature>
<feature type="mutagenesis site" description="Fails to form clusters and presents a diffused pattern throughout the cytoplasm." evidence="4">
    <original>R</original>
    <variation>H</variation>
    <location>
        <position position="26"/>
    </location>
</feature>
<feature type="mutagenesis site" description="Fails to form clusters and presents a diffused pattern throughout the cytoplasm." evidence="4">
    <location>
        <position position="45"/>
    </location>
</feature>
<feature type="mutagenesis site" description="Decreases TmaR clustering." evidence="4">
    <original>D</original>
    <variation>K</variation>
    <location>
        <position position="46"/>
    </location>
</feature>
<feature type="mutagenesis site" description="Fails to form clusters and presents a diffused pattern throughout the cytoplasm. Shows a reduced swimming ability, is completely impaired in swarming on semi-solid agar and has a dramatically reduced ability to form biofilms." evidence="4">
    <original>L</original>
    <variation>P</variation>
    <location>
        <position position="48"/>
    </location>
</feature>
<feature type="mutagenesis site" description="Localizes to the cell pole." evidence="2">
    <original>Y</original>
    <variation>F</variation>
    <location>
        <position position="51"/>
    </location>
</feature>
<feature type="mutagenesis site" description="Forms clusters that do not localize to the poles. Shows a reduced swimming ability, is completely impaired in swarming on semi-solid agar and has a dramatically reduced ability to form biofilms." evidence="4">
    <original>E</original>
    <variation>K</variation>
    <location>
        <position position="59"/>
    </location>
</feature>
<feature type="mutagenesis site" description="Does not localize to the cell poles." evidence="2">
    <original>Y</original>
    <variation>D</variation>
    <variation>E</variation>
    <location>
        <position position="72"/>
    </location>
</feature>
<feature type="mutagenesis site" description="Does not localize to the cell poles and is completely spread within the cytoplasm. Has no effect on survival in acidic conditions. Does not form foci. When overexpressed, forms polar aggregates and does not form chained cells." evidence="2 4">
    <original>Y</original>
    <variation>F</variation>
    <location>
        <position position="72"/>
    </location>
</feature>
<feature type="mutagenesis site" description="Fails to form clusters and presents a diffused pattern throughout the cytoplasm. Shows a reduced swimming ability, is completely impaired in swarming on semi-solid agar and has a dramatically reduced ability to form biofilms." evidence="4">
    <original>E</original>
    <variation>R</variation>
    <location>
        <position position="73"/>
    </location>
</feature>
<feature type="mutagenesis site" description="Localizes to the cell pole. Has no effect on survival in acidic conditions. Abolishes Hfq polar accumulation." evidence="2 3">
    <original>Y</original>
    <variation>F</variation>
    <location>
        <position position="79"/>
    </location>
</feature>
<feature type="mutagenesis site" description="Fails to form clusters and presents a diffused pattern throughout the cytoplasm. Shows a reduced swimming ability, is completely impaired in swarming on semi-solid agar and has a dramatically reduced ability to form biofilms." evidence="4">
    <original>R</original>
    <variation>H</variation>
    <location>
        <position position="91"/>
    </location>
</feature>
<feature type="mutagenesis site" description="Fails to form clusters and presents a diffused pattern throughout the cytoplasm." evidence="4">
    <original>R</original>
    <variation>S</variation>
    <location>
        <position position="91"/>
    </location>
</feature>
<feature type="mutagenesis site" description="Does not affect cluster formation." evidence="4">
    <original>K</original>
    <variation>E</variation>
    <location>
        <position position="95"/>
    </location>
</feature>
<feature type="sequence conflict" description="In Ref. 4; AA sequence." evidence="7" ref="4">
    <original>M</original>
    <variation>D</variation>
    <location>
        <position position="1"/>
    </location>
</feature>
<feature type="sequence conflict" description="In Ref. 4; AA sequence." evidence="7" ref="4">
    <original>S</original>
    <variation>D</variation>
    <location>
        <position position="7"/>
    </location>
</feature>
<protein>
    <recommendedName>
        <fullName evidence="6">Pole-localizer protein TmaR</fullName>
    </recommendedName>
    <alternativeName>
        <fullName evidence="7">PTS system regulator TmaR</fullName>
    </alternativeName>
    <alternativeName>
        <fullName evidence="5">Targeting of sugar metabolism-associated regulator</fullName>
    </alternativeName>
</protein>
<sequence>METTKPSFQDVLEFVRLFRRKNKLQREIQDVEKKIRDNQKRVLLLDNLSDYIKPGMSVEAIQGIIASMKGDYEDRVDDYIIKNAELSKERRDISKKLKAMGEMKNGEAK</sequence>
<gene>
    <name evidence="5" type="primary">tmaR</name>
    <name type="synonym">yeeX</name>
    <name type="ordered locus">b2007</name>
    <name type="ordered locus">JW1989</name>
</gene>
<organism>
    <name type="scientific">Escherichia coli (strain K12)</name>
    <dbReference type="NCBI Taxonomy" id="83333"/>
    <lineage>
        <taxon>Bacteria</taxon>
        <taxon>Pseudomonadati</taxon>
        <taxon>Pseudomonadota</taxon>
        <taxon>Gammaproteobacteria</taxon>
        <taxon>Enterobacterales</taxon>
        <taxon>Enterobacteriaceae</taxon>
        <taxon>Escherichia</taxon>
    </lineage>
</organism>
<comment type="function">
    <text evidence="2 3 4">Pole-localizer protein involved in the regulation of several cellular processes (PubMed:33376208, PubMed:36577380, PubMed:37934665). Regulated processes include sugar metabolism, cell motility and small RNA-mediated regulation (PubMed:33376208, PubMed:36577380, PubMed:37934665). TmaR controls the subcellular localization and the activity of PtsI, the general PTS system enzyme I (EI), by polar sequestration and release of PtsI (PubMed:33376208). Polar sequestration of PtsI restricts its activity, thus regulating sugar metabolism and enabling cell survival in mild acidic conditions (PubMed:33376208). TmaR does not affect localization of the phosphocarrier protein HPr (PubMed:33376208). It also plays a central role in cell motility (PubMed:37934665). It controls flagella production and, thus, cell motility and biofilm formation, by forming condensates that protect and stabilize flagella related transcripts at the poles (PubMed:37934665). In addition, TmaR affects small RNA-mediated regulation by recruiting the RNA-binding protein Hfq to the poles during certain stress conditions (PubMed:36577380). It plays a crucial role in Hfq condensation (PubMed:36577380).</text>
</comment>
<comment type="activity regulation">
    <text evidence="2 3">Regulated via phosphorylation (PubMed:33376208, PubMed:36577380). Phosphorylation of TmaR on Tyr-72 is required for the release of PtsI from the poles and for its activity (PubMed:33376208). Only phosphorylated TmaR can release PtsI from the poles, since the diffuse non-phosphorylated TmaR binds to PtsI quite irreversibly (PubMed:33376208).</text>
</comment>
<comment type="subunit">
    <text evidence="2">Interacts directly with the PTS EI component PtsI (PubMed:33376208). Binding is reversible as long as TmaR can get phosphorylated (PubMed:33376208).</text>
</comment>
<comment type="subcellular location">
    <subcellularLocation>
        <location evidence="2 4">Cytoplasm</location>
    </subcellularLocation>
    <text evidence="2 4">Forms clusters that localize mainly near one pole of the cell (PubMed:33376208, PubMed:37934665). Forms condensates at the cell poles in an RNA-dependent manner (PubMed:37934665). Phosphorylation on Tyr-72 is required for the formation of polar clusters (PubMed:33376208). Polar localization does not require PtsI (PubMed:33376208).</text>
</comment>
<comment type="developmental stage">
    <text evidence="2">The amount of TmaR does not change much among the different growth phases.</text>
</comment>
<comment type="domain">
    <text evidence="4">The two helices, which seemingly fold into a coiled-coil, and the C-terminal region are probably all necessary for TmaR condensation.</text>
</comment>
<comment type="PTM">
    <text evidence="2 3">Phosphorylated on Tyr-72 (PubMed:33376208). Phosphorylation on Tyr-72 is important for activity and polar localization of PtsI (PubMed:33376208). Phosphorylation on Tyr-79 might be required for polar localization of Hfq (PubMed:36577380).</text>
</comment>
<comment type="disruption phenotype">
    <text evidence="2 3 4">Cells lacking this gene are hyperactive for PTS sugar consumption (PubMed:33376208). In the absence of TmaR, PtsI is diffuse, released from the poles, and, therefore, more active in sugar uptake (PubMed:33376208). The absence of the gene also leads to detrimental effects on the ability of cells to survive in mild acidic conditions, probably due to PtsI hyperactivity (PubMed:33376208). Absence of the gene severely impairs the capacity of E.coli to produce flagella (PubMed:37934665). The mutant shows a reduced swimming ability, is completely impaired in swarming on semi-solid agar and has a dramatically reduced ability to form biofilms (PubMed:37934665). It also abolishes polar localization of Hfq in late stationary phase cells and Hfq condensation (PubMed:36577380).</text>
</comment>
<comment type="miscellaneous">
    <text evidence="4">Overexpression of TmaR leads to the formation of chained cells, suggesting that the cells cannot complete division (PubMed:37934665). Overexpressed TmaR forms filaments (PubMed:37934665).</text>
</comment>
<comment type="similarity">
    <text evidence="1 7">Belongs to the pole-localizer TmaR family.</text>
</comment>
<comment type="sequence caution" evidence="7">
    <conflict type="erroneous initiation">
        <sequence resource="EMBL-CDS" id="BAA15828"/>
    </conflict>
    <text>Extended N-terminus.</text>
</comment>
<reference key="1">
    <citation type="journal article" date="1996" name="DNA Res.">
        <title>A 460-kb DNA sequence of the Escherichia coli K-12 genome corresponding to the 40.1-50.0 min region on the linkage map.</title>
        <authorList>
            <person name="Itoh T."/>
            <person name="Aiba H."/>
            <person name="Baba T."/>
            <person name="Fujita K."/>
            <person name="Hayashi K."/>
            <person name="Inada T."/>
            <person name="Isono K."/>
            <person name="Kasai H."/>
            <person name="Kimura S."/>
            <person name="Kitakawa M."/>
            <person name="Kitagawa M."/>
            <person name="Makino K."/>
            <person name="Miki T."/>
            <person name="Mizobuchi K."/>
            <person name="Mori H."/>
            <person name="Mori T."/>
            <person name="Motomura K."/>
            <person name="Nakade S."/>
            <person name="Nakamura Y."/>
            <person name="Nashimoto H."/>
            <person name="Nishio Y."/>
            <person name="Oshima T."/>
            <person name="Saito N."/>
            <person name="Sampei G."/>
            <person name="Seki Y."/>
            <person name="Sivasundaram S."/>
            <person name="Tagami H."/>
            <person name="Takeda J."/>
            <person name="Takemoto K."/>
            <person name="Wada C."/>
            <person name="Yamamoto Y."/>
            <person name="Horiuchi T."/>
        </authorList>
    </citation>
    <scope>NUCLEOTIDE SEQUENCE [LARGE SCALE GENOMIC DNA]</scope>
    <source>
        <strain>K12 / W3110 / ATCC 27325 / DSM 5911</strain>
    </source>
</reference>
<reference key="2">
    <citation type="journal article" date="1997" name="Science">
        <title>The complete genome sequence of Escherichia coli K-12.</title>
        <authorList>
            <person name="Blattner F.R."/>
            <person name="Plunkett G. III"/>
            <person name="Bloch C.A."/>
            <person name="Perna N.T."/>
            <person name="Burland V."/>
            <person name="Riley M."/>
            <person name="Collado-Vides J."/>
            <person name="Glasner J.D."/>
            <person name="Rode C.K."/>
            <person name="Mayhew G.F."/>
            <person name="Gregor J."/>
            <person name="Davis N.W."/>
            <person name="Kirkpatrick H.A."/>
            <person name="Goeden M.A."/>
            <person name="Rose D.J."/>
            <person name="Mau B."/>
            <person name="Shao Y."/>
        </authorList>
    </citation>
    <scope>NUCLEOTIDE SEQUENCE [LARGE SCALE GENOMIC DNA]</scope>
    <source>
        <strain>K12 / MG1655 / ATCC 47076</strain>
    </source>
</reference>
<reference key="3">
    <citation type="journal article" date="2006" name="Mol. Syst. Biol.">
        <title>Highly accurate genome sequences of Escherichia coli K-12 strains MG1655 and W3110.</title>
        <authorList>
            <person name="Hayashi K."/>
            <person name="Morooka N."/>
            <person name="Yamamoto Y."/>
            <person name="Fujita K."/>
            <person name="Isono K."/>
            <person name="Choi S."/>
            <person name="Ohtsubo E."/>
            <person name="Baba T."/>
            <person name="Wanner B.L."/>
            <person name="Mori H."/>
            <person name="Horiuchi T."/>
        </authorList>
    </citation>
    <scope>NUCLEOTIDE SEQUENCE [LARGE SCALE GENOMIC DNA]</scope>
    <source>
        <strain>K12 / W3110 / ATCC 27325 / DSM 5911</strain>
    </source>
</reference>
<reference key="4">
    <citation type="journal article" date="1998" name="FEMS Microbiol. Lett.">
        <title>Small genes/gene-products in Escherichia coli K-12.</title>
        <authorList>
            <person name="Wasinger V.C."/>
            <person name="Humphery-Smith I."/>
        </authorList>
    </citation>
    <scope>PROTEIN SEQUENCE OF 1-10</scope>
    <source>
        <strain>K12</strain>
    </source>
</reference>
<reference key="5">
    <citation type="journal article" date="2021" name="Proc. Natl. Acad. Sci. U.S.A.">
        <title>Tyrosine phosphorylation-dependent localization of TmaR that controls activity of a major bacterial sugar regulator by polar sequestration.</title>
        <authorList>
            <person name="Szoke T."/>
            <person name="Albocher N."/>
            <person name="Govindarajan S."/>
            <person name="Nussbaum-Shochat A."/>
            <person name="Amster-Choder O."/>
        </authorList>
    </citation>
    <scope>FUNCTION</scope>
    <scope>ACTIVITY REGULATION</scope>
    <scope>INTERACTION WITH PTSI</scope>
    <scope>SUBCELLULAR LOCATION</scope>
    <scope>DEVELOPMENTAL STAGE</scope>
    <scope>PHOSPHORYLATION AT TYR-72</scope>
    <scope>DISRUPTION PHENOTYPE</scope>
    <scope>MUTAGENESIS OF TYR-51; TYR-72 AND TYR-79</scope>
    <source>
        <strain>K12 / BW25113</strain>
    </source>
</reference>
<reference key="6">
    <citation type="journal article" date="2022" name="Cell Rep.">
        <title>Heterotypic phase separation of Hfq is linked to its roles as an RNA chaperone.</title>
        <authorList>
            <person name="Goldberger O."/>
            <person name="Szoke T."/>
            <person name="Nussbaum-Shochat A."/>
            <person name="Amster-Choder O."/>
        </authorList>
    </citation>
    <scope>FUNCTION</scope>
    <scope>ACTIVITY REGULATION</scope>
    <scope>PROBABLE PHOSPHORYLATION AT TYR-79</scope>
    <scope>DISRUPTION PHENOTYPE</scope>
    <scope>MUTAGENESIS OF TYR-79</scope>
    <source>
        <strain>K12 / MG1655 / ATCC 47076</strain>
    </source>
</reference>
<reference key="7">
    <citation type="journal article" date="2023" name="Cell Rep.">
        <title>Regulation of major bacterial survival strategies by transcripts sequestration in a membraneless organelle.</title>
        <authorList>
            <person name="Szoke T."/>
            <person name="Goldberger O."/>
            <person name="Albocher-Kedem N."/>
            <person name="Barsheshet M."/>
            <person name="Dezorella N."/>
            <person name="Nussbaum-Shochat A."/>
            <person name="Wiener R."/>
            <person name="Schuldiner M."/>
            <person name="Amster-Choder O."/>
        </authorList>
    </citation>
    <scope>FUNCTION</scope>
    <scope>SUBCELLULAR LOCATION</scope>
    <scope>DOMAIN</scope>
    <scope>DISRUPTION PHENOTYPE</scope>
    <scope>OVEREXPRESSION</scope>
    <scope>MUTAGENESIS OF VAL-15; ARG-20; ARG-26; LEU-45; ASP-46; LEU-48; GLU-59; TYR-72; GLU-73; ARG-91 AND LYS-95</scope>
</reference>
<evidence type="ECO:0000255" key="1">
    <source>
        <dbReference type="HAMAP-Rule" id="MF_00683"/>
    </source>
</evidence>
<evidence type="ECO:0000269" key="2">
    <source>
    </source>
</evidence>
<evidence type="ECO:0000269" key="3">
    <source>
    </source>
</evidence>
<evidence type="ECO:0000269" key="4">
    <source>
    </source>
</evidence>
<evidence type="ECO:0000303" key="5">
    <source>
    </source>
</evidence>
<evidence type="ECO:0000303" key="6">
    <source>
    </source>
</evidence>
<evidence type="ECO:0000305" key="7"/>
<evidence type="ECO:0000305" key="8">
    <source>
    </source>
</evidence>